<comment type="function">
    <text evidence="1">Required for electron transfer from ubiquinol, via NapC, to the periplasmic nitrate reductase NapAB complex.</text>
</comment>
<comment type="cofactor">
    <cofactor evidence="3">
        <name>[4Fe-4S] cluster</name>
        <dbReference type="ChEBI" id="CHEBI:49883"/>
    </cofactor>
    <text evidence="3">Binds 4 [4Fe-4S] cluster.</text>
</comment>
<comment type="subcellular location">
    <subcellularLocation>
        <location evidence="1">Periplasm</location>
    </subcellularLocation>
</comment>
<comment type="PTM">
    <text evidence="2">Predicted to be exported by the Tat system. The position of the signal peptide cleavage has not been experimentally proven.</text>
</comment>
<proteinExistence type="inferred from homology"/>
<evidence type="ECO:0000250" key="1">
    <source>
        <dbReference type="UniProtKB" id="P0AAL3"/>
    </source>
</evidence>
<evidence type="ECO:0000255" key="2">
    <source>
        <dbReference type="PROSITE-ProRule" id="PRU00648"/>
    </source>
</evidence>
<evidence type="ECO:0000255" key="3">
    <source>
        <dbReference type="PROSITE-ProRule" id="PRU00711"/>
    </source>
</evidence>
<gene>
    <name type="primary">napG</name>
    <name type="ordered locus">HI_0345</name>
</gene>
<protein>
    <recommendedName>
        <fullName evidence="1">Ferredoxin-type protein NapG</fullName>
    </recommendedName>
</protein>
<accession>P44652</accession>
<organism>
    <name type="scientific">Haemophilus influenzae (strain ATCC 51907 / DSM 11121 / KW20 / Rd)</name>
    <dbReference type="NCBI Taxonomy" id="71421"/>
    <lineage>
        <taxon>Bacteria</taxon>
        <taxon>Pseudomonadati</taxon>
        <taxon>Pseudomonadota</taxon>
        <taxon>Gammaproteobacteria</taxon>
        <taxon>Pasteurellales</taxon>
        <taxon>Pasteurellaceae</taxon>
        <taxon>Haemophilus</taxon>
    </lineage>
</organism>
<reference key="1">
    <citation type="journal article" date="1995" name="Science">
        <title>Whole-genome random sequencing and assembly of Haemophilus influenzae Rd.</title>
        <authorList>
            <person name="Fleischmann R.D."/>
            <person name="Adams M.D."/>
            <person name="White O."/>
            <person name="Clayton R.A."/>
            <person name="Kirkness E.F."/>
            <person name="Kerlavage A.R."/>
            <person name="Bult C.J."/>
            <person name="Tomb J.-F."/>
            <person name="Dougherty B.A."/>
            <person name="Merrick J.M."/>
            <person name="McKenney K."/>
            <person name="Sutton G.G."/>
            <person name="FitzHugh W."/>
            <person name="Fields C.A."/>
            <person name="Gocayne J.D."/>
            <person name="Scott J.D."/>
            <person name="Shirley R."/>
            <person name="Liu L.-I."/>
            <person name="Glodek A."/>
            <person name="Kelley J.M."/>
            <person name="Weidman J.F."/>
            <person name="Phillips C.A."/>
            <person name="Spriggs T."/>
            <person name="Hedblom E."/>
            <person name="Cotton M.D."/>
            <person name="Utterback T.R."/>
            <person name="Hanna M.C."/>
            <person name="Nguyen D.T."/>
            <person name="Saudek D.M."/>
            <person name="Brandon R.C."/>
            <person name="Fine L.D."/>
            <person name="Fritchman J.L."/>
            <person name="Fuhrmann J.L."/>
            <person name="Geoghagen N.S.M."/>
            <person name="Gnehm C.L."/>
            <person name="McDonald L.A."/>
            <person name="Small K.V."/>
            <person name="Fraser C.M."/>
            <person name="Smith H.O."/>
            <person name="Venter J.C."/>
        </authorList>
    </citation>
    <scope>NUCLEOTIDE SEQUENCE [LARGE SCALE GENOMIC DNA]</scope>
    <source>
        <strain>ATCC 51907 / DSM 11121 / KW20 / Rd</strain>
    </source>
</reference>
<keyword id="KW-0004">4Fe-4S</keyword>
<keyword id="KW-0249">Electron transport</keyword>
<keyword id="KW-0408">Iron</keyword>
<keyword id="KW-0411">Iron-sulfur</keyword>
<keyword id="KW-0479">Metal-binding</keyword>
<keyword id="KW-0574">Periplasm</keyword>
<keyword id="KW-1185">Reference proteome</keyword>
<keyword id="KW-0677">Repeat</keyword>
<keyword id="KW-0732">Signal</keyword>
<keyword id="KW-0813">Transport</keyword>
<feature type="signal peptide" description="Tat-type signal" evidence="2">
    <location>
        <begin position="1"/>
        <end position="50"/>
    </location>
</feature>
<feature type="chain" id="PRO_0000159282" description="Ferredoxin-type protein NapG">
    <location>
        <begin position="51"/>
        <end position="279"/>
    </location>
</feature>
<feature type="domain" description="4Fe-4S ferredoxin-type 1" evidence="3">
    <location>
        <begin position="63"/>
        <end position="92"/>
    </location>
</feature>
<feature type="domain" description="4Fe-4S ferredoxin-type 2" evidence="3">
    <location>
        <begin position="100"/>
        <end position="132"/>
    </location>
</feature>
<feature type="domain" description="4Fe-4S ferredoxin-type 3" evidence="3">
    <location>
        <begin position="141"/>
        <end position="177"/>
    </location>
</feature>
<feature type="domain" description="4Fe-4S ferredoxin-type 4" evidence="3">
    <location>
        <begin position="188"/>
        <end position="219"/>
    </location>
</feature>
<feature type="binding site" evidence="3">
    <location>
        <position position="72"/>
    </location>
    <ligand>
        <name>[4Fe-4S] cluster</name>
        <dbReference type="ChEBI" id="CHEBI:49883"/>
        <label>1</label>
    </ligand>
</feature>
<feature type="binding site" evidence="3">
    <location>
        <position position="75"/>
    </location>
    <ligand>
        <name>[4Fe-4S] cluster</name>
        <dbReference type="ChEBI" id="CHEBI:49883"/>
        <label>1</label>
    </ligand>
</feature>
<feature type="binding site" evidence="3">
    <location>
        <position position="78"/>
    </location>
    <ligand>
        <name>[4Fe-4S] cluster</name>
        <dbReference type="ChEBI" id="CHEBI:49883"/>
        <label>1</label>
    </ligand>
</feature>
<feature type="binding site" evidence="3">
    <location>
        <position position="82"/>
    </location>
    <ligand>
        <name>[4Fe-4S] cluster</name>
        <dbReference type="ChEBI" id="CHEBI:49883"/>
        <label>1</label>
    </ligand>
</feature>
<feature type="binding site" evidence="3">
    <location>
        <position position="110"/>
    </location>
    <ligand>
        <name>[4Fe-4S] cluster</name>
        <dbReference type="ChEBI" id="CHEBI:49883"/>
        <label>2</label>
    </ligand>
</feature>
<feature type="binding site" evidence="3">
    <location>
        <position position="113"/>
    </location>
    <ligand>
        <name>[4Fe-4S] cluster</name>
        <dbReference type="ChEBI" id="CHEBI:49883"/>
        <label>2</label>
    </ligand>
</feature>
<feature type="binding site" evidence="3">
    <location>
        <position position="118"/>
    </location>
    <ligand>
        <name>[4Fe-4S] cluster</name>
        <dbReference type="ChEBI" id="CHEBI:49883"/>
        <label>2</label>
    </ligand>
</feature>
<feature type="binding site" evidence="3">
    <location>
        <position position="122"/>
    </location>
    <ligand>
        <name>[4Fe-4S] cluster</name>
        <dbReference type="ChEBI" id="CHEBI:49883"/>
        <label>2</label>
    </ligand>
</feature>
<feature type="binding site" evidence="3">
    <location>
        <position position="150"/>
    </location>
    <ligand>
        <name>[4Fe-4S] cluster</name>
        <dbReference type="ChEBI" id="CHEBI:49883"/>
        <label>3</label>
    </ligand>
</feature>
<feature type="binding site" evidence="3">
    <location>
        <position position="158"/>
    </location>
    <ligand>
        <name>[4Fe-4S] cluster</name>
        <dbReference type="ChEBI" id="CHEBI:49883"/>
        <label>3</label>
    </ligand>
</feature>
<feature type="binding site" evidence="3">
    <location>
        <position position="161"/>
    </location>
    <ligand>
        <name>[4Fe-4S] cluster</name>
        <dbReference type="ChEBI" id="CHEBI:49883"/>
        <label>3</label>
    </ligand>
</feature>
<feature type="binding site" evidence="3">
    <location>
        <position position="165"/>
    </location>
    <ligand>
        <name>[4Fe-4S] cluster</name>
        <dbReference type="ChEBI" id="CHEBI:49883"/>
        <label>3</label>
    </ligand>
</feature>
<feature type="binding site" evidence="3">
    <location>
        <position position="197"/>
    </location>
    <ligand>
        <name>[4Fe-4S] cluster</name>
        <dbReference type="ChEBI" id="CHEBI:49883"/>
        <label>4</label>
    </ligand>
</feature>
<feature type="binding site" evidence="3">
    <location>
        <position position="200"/>
    </location>
    <ligand>
        <name>[4Fe-4S] cluster</name>
        <dbReference type="ChEBI" id="CHEBI:49883"/>
        <label>4</label>
    </ligand>
</feature>
<feature type="binding site" evidence="3">
    <location>
        <position position="203"/>
    </location>
    <ligand>
        <name>[4Fe-4S] cluster</name>
        <dbReference type="ChEBI" id="CHEBI:49883"/>
        <label>4</label>
    </ligand>
</feature>
<feature type="binding site" evidence="3">
    <location>
        <position position="207"/>
    </location>
    <ligand>
        <name>[4Fe-4S] cluster</name>
        <dbReference type="ChEBI" id="CHEBI:49883"/>
        <label>4</label>
    </ligand>
</feature>
<name>NAPG_HAEIN</name>
<dbReference type="EMBL" id="L42023">
    <property type="protein sequence ID" value="AAC22006.1"/>
    <property type="molecule type" value="Genomic_DNA"/>
</dbReference>
<dbReference type="PIR" id="A64149">
    <property type="entry name" value="A64149"/>
</dbReference>
<dbReference type="RefSeq" id="NP_438509.1">
    <property type="nucleotide sequence ID" value="NC_000907.1"/>
</dbReference>
<dbReference type="STRING" id="71421.HI_0345"/>
<dbReference type="EnsemblBacteria" id="AAC22006">
    <property type="protein sequence ID" value="AAC22006"/>
    <property type="gene ID" value="HI_0345"/>
</dbReference>
<dbReference type="KEGG" id="hin:HI_0345"/>
<dbReference type="PATRIC" id="fig|71421.8.peg.364"/>
<dbReference type="eggNOG" id="COG0437">
    <property type="taxonomic scope" value="Bacteria"/>
</dbReference>
<dbReference type="HOGENOM" id="CLU_077329_0_0_6"/>
<dbReference type="OrthoDB" id="9808559at2"/>
<dbReference type="PhylomeDB" id="P44652"/>
<dbReference type="BioCyc" id="HINF71421:G1GJ1-361-MONOMER"/>
<dbReference type="Proteomes" id="UP000000579">
    <property type="component" value="Chromosome"/>
</dbReference>
<dbReference type="GO" id="GO:0042597">
    <property type="term" value="C:periplasmic space"/>
    <property type="evidence" value="ECO:0007669"/>
    <property type="project" value="UniProtKB-SubCell"/>
</dbReference>
<dbReference type="GO" id="GO:0051539">
    <property type="term" value="F:4 iron, 4 sulfur cluster binding"/>
    <property type="evidence" value="ECO:0007669"/>
    <property type="project" value="UniProtKB-KW"/>
</dbReference>
<dbReference type="GO" id="GO:0046872">
    <property type="term" value="F:metal ion binding"/>
    <property type="evidence" value="ECO:0007669"/>
    <property type="project" value="UniProtKB-KW"/>
</dbReference>
<dbReference type="CDD" id="cd16373">
    <property type="entry name" value="DMSOR_beta_like"/>
    <property type="match status" value="1"/>
</dbReference>
<dbReference type="FunFam" id="3.30.70.20:FF:000019">
    <property type="entry name" value="Ferredoxin-type protein NapG"/>
    <property type="match status" value="1"/>
</dbReference>
<dbReference type="FunFam" id="3.30.70.20:FF:000021">
    <property type="entry name" value="MauM/NapG family ferredoxin-type protein"/>
    <property type="match status" value="1"/>
</dbReference>
<dbReference type="Gene3D" id="3.30.70.20">
    <property type="match status" value="2"/>
</dbReference>
<dbReference type="InterPro" id="IPR017896">
    <property type="entry name" value="4Fe4S_Fe-S-bd"/>
</dbReference>
<dbReference type="InterPro" id="IPR017900">
    <property type="entry name" value="4Fe4S_Fe_S_CS"/>
</dbReference>
<dbReference type="InterPro" id="IPR004494">
    <property type="entry name" value="MauM_NapG"/>
</dbReference>
<dbReference type="InterPro" id="IPR050294">
    <property type="entry name" value="RnfB_subfamily"/>
</dbReference>
<dbReference type="InterPro" id="IPR019546">
    <property type="entry name" value="TAT_signal_bac_arc"/>
</dbReference>
<dbReference type="NCBIfam" id="TIGR00397">
    <property type="entry name" value="mauM_napG"/>
    <property type="match status" value="1"/>
</dbReference>
<dbReference type="NCBIfam" id="NF007012">
    <property type="entry name" value="PRK09476.1"/>
    <property type="match status" value="1"/>
</dbReference>
<dbReference type="NCBIfam" id="TIGR01409">
    <property type="entry name" value="TAT_signal_seq"/>
    <property type="match status" value="1"/>
</dbReference>
<dbReference type="PANTHER" id="PTHR42859:SF10">
    <property type="entry name" value="DIMETHYLSULFOXIDE REDUCTASE CHAIN B"/>
    <property type="match status" value="1"/>
</dbReference>
<dbReference type="PANTHER" id="PTHR42859">
    <property type="entry name" value="OXIDOREDUCTASE"/>
    <property type="match status" value="1"/>
</dbReference>
<dbReference type="Pfam" id="PF12838">
    <property type="entry name" value="Fer4_7"/>
    <property type="match status" value="2"/>
</dbReference>
<dbReference type="SUPFAM" id="SSF54862">
    <property type="entry name" value="4Fe-4S ferredoxins"/>
    <property type="match status" value="1"/>
</dbReference>
<dbReference type="PROSITE" id="PS00198">
    <property type="entry name" value="4FE4S_FER_1"/>
    <property type="match status" value="1"/>
</dbReference>
<dbReference type="PROSITE" id="PS51379">
    <property type="entry name" value="4FE4S_FER_2"/>
    <property type="match status" value="4"/>
</dbReference>
<sequence length="279" mass="30227">MKVRLKSKKKMKKPALNPERRKFLKEATRTAGGLAGVGILLGLQQNQSLAREGVPLRPPFALQDAKAFSAACIRCGQCVQACPYDMLHLASLLSPVEAGTPYFIARDKPCEMCPDIPCAKACPSGALDRQATDINESRMGLSVLLDHETCLNYQGLRCDVCYRVCPLIDKAITLETQHNPRSDKHALFIPTVHSDACTGCGKCEQACVLEEAAIKILPMDLAKGMLGKHYRLGWEEKAKAGHSLAPKDMISLPTRTPEGTTVIPEPAEPVLAPILGSGK</sequence>